<accession>B0V6X2</accession>
<sequence length="91" mass="10184">MPRSLKKGPFVDAHLFAKVEAAVASNSRKPIKTWSRRSMILPDFVGLTISVHNGRNHVPVIVTEHMVGHKLGEFAPTRTYRGHGVDKKSKR</sequence>
<evidence type="ECO:0000255" key="1">
    <source>
        <dbReference type="HAMAP-Rule" id="MF_00531"/>
    </source>
</evidence>
<evidence type="ECO:0000305" key="2"/>
<protein>
    <recommendedName>
        <fullName evidence="1">Small ribosomal subunit protein uS19</fullName>
    </recommendedName>
    <alternativeName>
        <fullName evidence="2">30S ribosomal protein S19</fullName>
    </alternativeName>
</protein>
<gene>
    <name evidence="1" type="primary">rpsS</name>
    <name type="ordered locus">ABAYE0412</name>
</gene>
<feature type="chain" id="PRO_1000127916" description="Small ribosomal subunit protein uS19">
    <location>
        <begin position="1"/>
        <end position="91"/>
    </location>
</feature>
<dbReference type="EMBL" id="CU459141">
    <property type="protein sequence ID" value="CAM85386.1"/>
    <property type="molecule type" value="Genomic_DNA"/>
</dbReference>
<dbReference type="RefSeq" id="WP_001138119.1">
    <property type="nucleotide sequence ID" value="NZ_JBDGFB010000011.1"/>
</dbReference>
<dbReference type="SMR" id="B0V6X2"/>
<dbReference type="EnsemblBacteria" id="CAM85386">
    <property type="protein sequence ID" value="CAM85386"/>
    <property type="gene ID" value="ABAYE0412"/>
</dbReference>
<dbReference type="GeneID" id="97425203"/>
<dbReference type="KEGG" id="aby:ABAYE0412"/>
<dbReference type="HOGENOM" id="CLU_144911_0_1_6"/>
<dbReference type="GO" id="GO:0005737">
    <property type="term" value="C:cytoplasm"/>
    <property type="evidence" value="ECO:0007669"/>
    <property type="project" value="UniProtKB-ARBA"/>
</dbReference>
<dbReference type="GO" id="GO:0015935">
    <property type="term" value="C:small ribosomal subunit"/>
    <property type="evidence" value="ECO:0007669"/>
    <property type="project" value="InterPro"/>
</dbReference>
<dbReference type="GO" id="GO:0019843">
    <property type="term" value="F:rRNA binding"/>
    <property type="evidence" value="ECO:0007669"/>
    <property type="project" value="UniProtKB-UniRule"/>
</dbReference>
<dbReference type="GO" id="GO:0003735">
    <property type="term" value="F:structural constituent of ribosome"/>
    <property type="evidence" value="ECO:0007669"/>
    <property type="project" value="InterPro"/>
</dbReference>
<dbReference type="GO" id="GO:0000028">
    <property type="term" value="P:ribosomal small subunit assembly"/>
    <property type="evidence" value="ECO:0007669"/>
    <property type="project" value="TreeGrafter"/>
</dbReference>
<dbReference type="GO" id="GO:0006412">
    <property type="term" value="P:translation"/>
    <property type="evidence" value="ECO:0007669"/>
    <property type="project" value="UniProtKB-UniRule"/>
</dbReference>
<dbReference type="FunFam" id="3.30.860.10:FF:000001">
    <property type="entry name" value="30S ribosomal protein S19"/>
    <property type="match status" value="1"/>
</dbReference>
<dbReference type="Gene3D" id="3.30.860.10">
    <property type="entry name" value="30s Ribosomal Protein S19, Chain A"/>
    <property type="match status" value="1"/>
</dbReference>
<dbReference type="HAMAP" id="MF_00531">
    <property type="entry name" value="Ribosomal_uS19"/>
    <property type="match status" value="1"/>
</dbReference>
<dbReference type="InterPro" id="IPR002222">
    <property type="entry name" value="Ribosomal_uS19"/>
</dbReference>
<dbReference type="InterPro" id="IPR005732">
    <property type="entry name" value="Ribosomal_uS19_bac-type"/>
</dbReference>
<dbReference type="InterPro" id="IPR020934">
    <property type="entry name" value="Ribosomal_uS19_CS"/>
</dbReference>
<dbReference type="InterPro" id="IPR023575">
    <property type="entry name" value="Ribosomal_uS19_SF"/>
</dbReference>
<dbReference type="NCBIfam" id="TIGR01050">
    <property type="entry name" value="rpsS_bact"/>
    <property type="match status" value="1"/>
</dbReference>
<dbReference type="PANTHER" id="PTHR11880">
    <property type="entry name" value="RIBOSOMAL PROTEIN S19P FAMILY MEMBER"/>
    <property type="match status" value="1"/>
</dbReference>
<dbReference type="PANTHER" id="PTHR11880:SF8">
    <property type="entry name" value="SMALL RIBOSOMAL SUBUNIT PROTEIN US19M"/>
    <property type="match status" value="1"/>
</dbReference>
<dbReference type="Pfam" id="PF00203">
    <property type="entry name" value="Ribosomal_S19"/>
    <property type="match status" value="1"/>
</dbReference>
<dbReference type="PIRSF" id="PIRSF002144">
    <property type="entry name" value="Ribosomal_S19"/>
    <property type="match status" value="1"/>
</dbReference>
<dbReference type="PRINTS" id="PR00975">
    <property type="entry name" value="RIBOSOMALS19"/>
</dbReference>
<dbReference type="SUPFAM" id="SSF54570">
    <property type="entry name" value="Ribosomal protein S19"/>
    <property type="match status" value="1"/>
</dbReference>
<dbReference type="PROSITE" id="PS00323">
    <property type="entry name" value="RIBOSOMAL_S19"/>
    <property type="match status" value="1"/>
</dbReference>
<organism>
    <name type="scientific">Acinetobacter baumannii (strain AYE)</name>
    <dbReference type="NCBI Taxonomy" id="509173"/>
    <lineage>
        <taxon>Bacteria</taxon>
        <taxon>Pseudomonadati</taxon>
        <taxon>Pseudomonadota</taxon>
        <taxon>Gammaproteobacteria</taxon>
        <taxon>Moraxellales</taxon>
        <taxon>Moraxellaceae</taxon>
        <taxon>Acinetobacter</taxon>
        <taxon>Acinetobacter calcoaceticus/baumannii complex</taxon>
    </lineage>
</organism>
<name>RS19_ACIBY</name>
<proteinExistence type="inferred from homology"/>
<keyword id="KW-0687">Ribonucleoprotein</keyword>
<keyword id="KW-0689">Ribosomal protein</keyword>
<keyword id="KW-0694">RNA-binding</keyword>
<keyword id="KW-0699">rRNA-binding</keyword>
<reference key="1">
    <citation type="journal article" date="2008" name="PLoS ONE">
        <title>Comparative analysis of Acinetobacters: three genomes for three lifestyles.</title>
        <authorList>
            <person name="Vallenet D."/>
            <person name="Nordmann P."/>
            <person name="Barbe V."/>
            <person name="Poirel L."/>
            <person name="Mangenot S."/>
            <person name="Bataille E."/>
            <person name="Dossat C."/>
            <person name="Gas S."/>
            <person name="Kreimeyer A."/>
            <person name="Lenoble P."/>
            <person name="Oztas S."/>
            <person name="Poulain J."/>
            <person name="Segurens B."/>
            <person name="Robert C."/>
            <person name="Abergel C."/>
            <person name="Claverie J.-M."/>
            <person name="Raoult D."/>
            <person name="Medigue C."/>
            <person name="Weissenbach J."/>
            <person name="Cruveiller S."/>
        </authorList>
    </citation>
    <scope>NUCLEOTIDE SEQUENCE [LARGE SCALE GENOMIC DNA]</scope>
    <source>
        <strain>AYE</strain>
    </source>
</reference>
<comment type="function">
    <text evidence="1">Protein S19 forms a complex with S13 that binds strongly to the 16S ribosomal RNA.</text>
</comment>
<comment type="similarity">
    <text evidence="1">Belongs to the universal ribosomal protein uS19 family.</text>
</comment>